<protein>
    <recommendedName>
        <fullName>GPI ethanolamine phosphate transferase 1</fullName>
        <ecNumber>2.-.-.-</ecNumber>
    </recommendedName>
</protein>
<keyword id="KW-0961">Cell wall biogenesis/degradation</keyword>
<keyword id="KW-0256">Endoplasmic reticulum</keyword>
<keyword id="KW-0325">Glycoprotein</keyword>
<keyword id="KW-0337">GPI-anchor biosynthesis</keyword>
<keyword id="KW-0472">Membrane</keyword>
<keyword id="KW-1185">Reference proteome</keyword>
<keyword id="KW-0808">Transferase</keyword>
<keyword id="KW-0812">Transmembrane</keyword>
<keyword id="KW-1133">Transmembrane helix</keyword>
<gene>
    <name type="primary">MCD4</name>
    <name type="ordered locus">CAALFM_C112200WA</name>
    <name type="ORF">CaO19.12709</name>
    <name type="ORF">CaO19.5244</name>
</gene>
<organism>
    <name type="scientific">Candida albicans (strain SC5314 / ATCC MYA-2876)</name>
    <name type="common">Yeast</name>
    <dbReference type="NCBI Taxonomy" id="237561"/>
    <lineage>
        <taxon>Eukaryota</taxon>
        <taxon>Fungi</taxon>
        <taxon>Dikarya</taxon>
        <taxon>Ascomycota</taxon>
        <taxon>Saccharomycotina</taxon>
        <taxon>Pichiomycetes</taxon>
        <taxon>Debaryomycetaceae</taxon>
        <taxon>Candida/Lodderomyces clade</taxon>
        <taxon>Candida</taxon>
    </lineage>
</organism>
<sequence>MDRNRQLLLVIGVLFHFFYLWSIFDIYFVSPLVHGMDHHKSTWTPPAKRLFLIVGDGLRADKTFQKLTHPRTGEEKYLAPYLRSLALNNGTWGISNTRMPTESRPGHVAMIAGFYEDVSAVTKGWKENPVDFDSFFNQSKHTYSFGSPDILPMFAFGDGVVPGRIDVCMYGHEFEDFTASSIELDAYVFHHLDELMHNSTTNATLNEELRQDGNVFFLHLLGPDTAGHAYRPYSAEYYENIEYIDRKLEEVIPQINKFFGDDQTAFVFTADHGMSDFGSHGDGHPDNTRTPLIAWGAGVKKPIHLQDVSNLEEQLLKQSPENSGFESTYFDTWELDHLVRNDVNQADIASLMAYLIGANYPANSVGELPLGYIDADPVTKARALYANSLAIVEQYFVKEQEVYNHQFKFKPYSPFEEKSIQKYQQEIESLIDQLEKSGSGSKDEIEKKVIAKIEELMKTTLDGLTYLQTYNWLLLRSIVTLGFFGWIVYSFNIFLKLFVLNEDELKIPPEFSVTLVGIFGALAISINYLLFYQNSPFNYYMYAAFPLYFWYTILNEKKYLITGIESFLHGISNTTKFLIVVSFIGMYEGIAYGFFERVMFSIILIIIGLYPLLVHGAHKVSGLMKTIWFITCLLMCTFTNLDPVKIESLFQINVGTILALIVSIMGTKQVFKRTQVGPIQKQLIIAQIAIIPIILFATNISVLSLQARTGLPLYSQILGWITFIVSLIVLPILHFLNPSSDYQLRLLIIFLTFVPTFIILTISFELLFYVGFSLILLQWLSIEELLKFSHKDLVETFEKTGKLPKGYWLQVIRITIIGFFFLQLAFFGTGNIASISSFSLDSVYRLIPIFDPFSMGALLMIKLIIPYVLLSTCLGIMNHQLEIKKFTISTLIISTSDFLSLNFFFLVRTEGSWLDIGVSISNYCLAILSSLFMLILELISSVVLSGVEYNSDGTKLDFEPISYRVRKRKVT</sequence>
<evidence type="ECO:0000250" key="1"/>
<evidence type="ECO:0000255" key="2"/>
<evidence type="ECO:0000305" key="3"/>
<reference key="1">
    <citation type="journal article" date="2004" name="Proc. Natl. Acad. Sci. U.S.A.">
        <title>The diploid genome sequence of Candida albicans.</title>
        <authorList>
            <person name="Jones T."/>
            <person name="Federspiel N.A."/>
            <person name="Chibana H."/>
            <person name="Dungan J."/>
            <person name="Kalman S."/>
            <person name="Magee B.B."/>
            <person name="Newport G."/>
            <person name="Thorstenson Y.R."/>
            <person name="Agabian N."/>
            <person name="Magee P.T."/>
            <person name="Davis R.W."/>
            <person name="Scherer S."/>
        </authorList>
    </citation>
    <scope>NUCLEOTIDE SEQUENCE [LARGE SCALE GENOMIC DNA]</scope>
    <source>
        <strain>SC5314 / ATCC MYA-2876</strain>
    </source>
</reference>
<reference key="2">
    <citation type="journal article" date="2007" name="Genome Biol.">
        <title>Assembly of the Candida albicans genome into sixteen supercontigs aligned on the eight chromosomes.</title>
        <authorList>
            <person name="van het Hoog M."/>
            <person name="Rast T.J."/>
            <person name="Martchenko M."/>
            <person name="Grindle S."/>
            <person name="Dignard D."/>
            <person name="Hogues H."/>
            <person name="Cuomo C."/>
            <person name="Berriman M."/>
            <person name="Scherer S."/>
            <person name="Magee B.B."/>
            <person name="Whiteway M."/>
            <person name="Chibana H."/>
            <person name="Nantel A."/>
            <person name="Magee P.T."/>
        </authorList>
    </citation>
    <scope>GENOME REANNOTATION</scope>
    <source>
        <strain>SC5314 / ATCC MYA-2876</strain>
    </source>
</reference>
<reference key="3">
    <citation type="journal article" date="2013" name="Genome Biol.">
        <title>Assembly of a phased diploid Candida albicans genome facilitates allele-specific measurements and provides a simple model for repeat and indel structure.</title>
        <authorList>
            <person name="Muzzey D."/>
            <person name="Schwartz K."/>
            <person name="Weissman J.S."/>
            <person name="Sherlock G."/>
        </authorList>
    </citation>
    <scope>NUCLEOTIDE SEQUENCE [LARGE SCALE GENOMIC DNA]</scope>
    <scope>GENOME REANNOTATION</scope>
    <source>
        <strain>SC5314 / ATCC MYA-2876</strain>
    </source>
</reference>
<accession>Q5A3M6</accession>
<accession>A0A1D8PFC6</accession>
<name>MCD4_CANAL</name>
<comment type="function">
    <text evidence="1">Ethanolamine phosphate transferase involved in glycosylphosphatidylinositol-anchor biosynthesis. Transfers ethanolamine phosphate to the first alpha-1,4-linked mannose of the glycosylphosphatidylinositol precursor of GPI-anchor (By similarity).</text>
</comment>
<comment type="pathway">
    <text>Glycolipid biosynthesis; glycosylphosphatidylinositol-anchor biosynthesis.</text>
</comment>
<comment type="subcellular location">
    <subcellularLocation>
        <location evidence="1">Endoplasmic reticulum membrane</location>
        <topology evidence="1">Multi-pass membrane protein</topology>
    </subcellularLocation>
</comment>
<comment type="similarity">
    <text evidence="3">Belongs to the PIGG/PIGN/PIGO family. PIGN subfamily.</text>
</comment>
<dbReference type="EC" id="2.-.-.-"/>
<dbReference type="EMBL" id="CP017623">
    <property type="protein sequence ID" value="AOW26839.1"/>
    <property type="molecule type" value="Genomic_DNA"/>
</dbReference>
<dbReference type="RefSeq" id="XP_716313.1">
    <property type="nucleotide sequence ID" value="XM_711220.2"/>
</dbReference>
<dbReference type="FunCoup" id="Q5A3M6">
    <property type="interactions" value="500"/>
</dbReference>
<dbReference type="STRING" id="237561.Q5A3M6"/>
<dbReference type="GlyCosmos" id="Q5A3M6">
    <property type="glycosylation" value="4 sites, No reported glycans"/>
</dbReference>
<dbReference type="EnsemblFungi" id="C1_12200W_A-T">
    <property type="protein sequence ID" value="C1_12200W_A-T-p1"/>
    <property type="gene ID" value="C1_12200W_A"/>
</dbReference>
<dbReference type="GeneID" id="3642036"/>
<dbReference type="KEGG" id="cal:CAALFM_C112200WA"/>
<dbReference type="CGD" id="CAL0000201697">
    <property type="gene designation" value="MCD4"/>
</dbReference>
<dbReference type="VEuPathDB" id="FungiDB:C1_12200W_A"/>
<dbReference type="eggNOG" id="KOG2124">
    <property type="taxonomic scope" value="Eukaryota"/>
</dbReference>
<dbReference type="HOGENOM" id="CLU_007676_0_0_1"/>
<dbReference type="InParanoid" id="Q5A3M6"/>
<dbReference type="OMA" id="QSYFHRE"/>
<dbReference type="OrthoDB" id="2748310at2759"/>
<dbReference type="UniPathway" id="UPA00196"/>
<dbReference type="PRO" id="PR:Q5A3M6"/>
<dbReference type="Proteomes" id="UP000000559">
    <property type="component" value="Chromosome 1"/>
</dbReference>
<dbReference type="GO" id="GO:0005789">
    <property type="term" value="C:endoplasmic reticulum membrane"/>
    <property type="evidence" value="ECO:0000318"/>
    <property type="project" value="GO_Central"/>
</dbReference>
<dbReference type="GO" id="GO:0051377">
    <property type="term" value="F:mannose-ethanolamine phosphotransferase activity"/>
    <property type="evidence" value="ECO:0000318"/>
    <property type="project" value="GO_Central"/>
</dbReference>
<dbReference type="GO" id="GO:0071555">
    <property type="term" value="P:cell wall organization"/>
    <property type="evidence" value="ECO:0007669"/>
    <property type="project" value="UniProtKB-KW"/>
</dbReference>
<dbReference type="GO" id="GO:0006506">
    <property type="term" value="P:GPI anchor biosynthetic process"/>
    <property type="evidence" value="ECO:0000318"/>
    <property type="project" value="GO_Central"/>
</dbReference>
<dbReference type="CDD" id="cd16020">
    <property type="entry name" value="GPI_EPT_1"/>
    <property type="match status" value="1"/>
</dbReference>
<dbReference type="FunFam" id="3.40.720.10:FF:000015">
    <property type="entry name" value="GPI ethanolamine phosphate transferase 1"/>
    <property type="match status" value="1"/>
</dbReference>
<dbReference type="Gene3D" id="3.40.720.10">
    <property type="entry name" value="Alkaline Phosphatase, subunit A"/>
    <property type="match status" value="1"/>
</dbReference>
<dbReference type="InterPro" id="IPR017850">
    <property type="entry name" value="Alkaline_phosphatase_core_sf"/>
</dbReference>
<dbReference type="InterPro" id="IPR007070">
    <property type="entry name" value="GPI_EtnP_transferase_1"/>
</dbReference>
<dbReference type="InterPro" id="IPR017852">
    <property type="entry name" value="GPI_EtnP_transferase_1_C"/>
</dbReference>
<dbReference type="InterPro" id="IPR002591">
    <property type="entry name" value="Phosphodiest/P_Trfase"/>
</dbReference>
<dbReference type="InterPro" id="IPR037671">
    <property type="entry name" value="PIGN_N"/>
</dbReference>
<dbReference type="PANTHER" id="PTHR12250:SF0">
    <property type="entry name" value="GPI ETHANOLAMINE PHOSPHATE TRANSFERASE 1"/>
    <property type="match status" value="1"/>
</dbReference>
<dbReference type="PANTHER" id="PTHR12250">
    <property type="entry name" value="PHOSPHATIDYLINOSITOL GLYCAN, CLASS N"/>
    <property type="match status" value="1"/>
</dbReference>
<dbReference type="Pfam" id="PF01663">
    <property type="entry name" value="Phosphodiest"/>
    <property type="match status" value="1"/>
</dbReference>
<dbReference type="Pfam" id="PF04987">
    <property type="entry name" value="PigN"/>
    <property type="match status" value="1"/>
</dbReference>
<dbReference type="SUPFAM" id="SSF53649">
    <property type="entry name" value="Alkaline phosphatase-like"/>
    <property type="match status" value="1"/>
</dbReference>
<feature type="chain" id="PRO_0000246203" description="GPI ethanolamine phosphate transferase 1">
    <location>
        <begin position="1"/>
        <end position="971"/>
    </location>
</feature>
<feature type="topological domain" description="Cytoplasmic" evidence="2">
    <location>
        <begin position="1"/>
        <end position="8"/>
    </location>
</feature>
<feature type="transmembrane region" description="Helical" evidence="2">
    <location>
        <begin position="9"/>
        <end position="29"/>
    </location>
</feature>
<feature type="topological domain" description="Lumenal" evidence="2">
    <location>
        <begin position="30"/>
        <end position="477"/>
    </location>
</feature>
<feature type="transmembrane region" description="Helical" evidence="2">
    <location>
        <begin position="478"/>
        <end position="498"/>
    </location>
</feature>
<feature type="topological domain" description="Cytoplasmic" evidence="2">
    <location>
        <begin position="499"/>
        <end position="510"/>
    </location>
</feature>
<feature type="transmembrane region" description="Helical" evidence="2">
    <location>
        <begin position="511"/>
        <end position="531"/>
    </location>
</feature>
<feature type="topological domain" description="Lumenal" evidence="2">
    <location>
        <begin position="532"/>
        <end position="533"/>
    </location>
</feature>
<feature type="transmembrane region" description="Helical" evidence="2">
    <location>
        <begin position="534"/>
        <end position="554"/>
    </location>
</feature>
<feature type="topological domain" description="Cytoplasmic" evidence="2">
    <location>
        <begin position="555"/>
        <end position="574"/>
    </location>
</feature>
<feature type="transmembrane region" description="Helical" evidence="2">
    <location>
        <begin position="575"/>
        <end position="595"/>
    </location>
</feature>
<feature type="topological domain" description="Lumenal" evidence="2">
    <location>
        <begin position="596"/>
        <end position="597"/>
    </location>
</feature>
<feature type="transmembrane region" description="Helical" evidence="2">
    <location>
        <begin position="598"/>
        <end position="618"/>
    </location>
</feature>
<feature type="topological domain" description="Cytoplasmic" evidence="2">
    <location>
        <position position="619"/>
    </location>
</feature>
<feature type="transmembrane region" description="Helical" evidence="2">
    <location>
        <begin position="620"/>
        <end position="640"/>
    </location>
</feature>
<feature type="topological domain" description="Lumenal" evidence="2">
    <location>
        <begin position="641"/>
        <end position="645"/>
    </location>
</feature>
<feature type="transmembrane region" description="Helical" evidence="2">
    <location>
        <begin position="646"/>
        <end position="666"/>
    </location>
</feature>
<feature type="topological domain" description="Cytoplasmic" evidence="2">
    <location>
        <begin position="667"/>
        <end position="682"/>
    </location>
</feature>
<feature type="transmembrane region" description="Helical" evidence="2">
    <location>
        <begin position="683"/>
        <end position="703"/>
    </location>
</feature>
<feature type="topological domain" description="Lumenal" evidence="2">
    <location>
        <begin position="704"/>
        <end position="716"/>
    </location>
</feature>
<feature type="transmembrane region" description="Helical" evidence="2">
    <location>
        <begin position="717"/>
        <end position="737"/>
    </location>
</feature>
<feature type="topological domain" description="Cytoplasmic" evidence="2">
    <location>
        <begin position="738"/>
        <end position="745"/>
    </location>
</feature>
<feature type="transmembrane region" description="Helical" evidence="2">
    <location>
        <begin position="746"/>
        <end position="768"/>
    </location>
</feature>
<feature type="topological domain" description="Lumenal" evidence="2">
    <location>
        <begin position="769"/>
        <end position="813"/>
    </location>
</feature>
<feature type="transmembrane region" description="Helical" evidence="2">
    <location>
        <begin position="814"/>
        <end position="834"/>
    </location>
</feature>
<feature type="topological domain" description="Cytoplasmic" evidence="2">
    <location>
        <begin position="835"/>
        <end position="856"/>
    </location>
</feature>
<feature type="transmembrane region" description="Helical" evidence="2">
    <location>
        <begin position="857"/>
        <end position="877"/>
    </location>
</feature>
<feature type="topological domain" description="Lumenal" evidence="2">
    <location>
        <begin position="878"/>
        <end position="885"/>
    </location>
</feature>
<feature type="transmembrane region" description="Helical" evidence="2">
    <location>
        <begin position="886"/>
        <end position="906"/>
    </location>
</feature>
<feature type="topological domain" description="Cytoplasmic" evidence="2">
    <location>
        <begin position="907"/>
        <end position="923"/>
    </location>
</feature>
<feature type="transmembrane region" description="Helical" evidence="2">
    <location>
        <begin position="924"/>
        <end position="944"/>
    </location>
</feature>
<feature type="topological domain" description="Lumenal" evidence="2">
    <location>
        <begin position="945"/>
        <end position="971"/>
    </location>
</feature>
<feature type="glycosylation site" description="N-linked (GlcNAc...) asparagine" evidence="2">
    <location>
        <position position="89"/>
    </location>
</feature>
<feature type="glycosylation site" description="N-linked (GlcNAc...) asparagine" evidence="2">
    <location>
        <position position="137"/>
    </location>
</feature>
<feature type="glycosylation site" description="N-linked (GlcNAc...) asparagine" evidence="2">
    <location>
        <position position="198"/>
    </location>
</feature>
<feature type="glycosylation site" description="N-linked (GlcNAc...) asparagine" evidence="2">
    <location>
        <position position="202"/>
    </location>
</feature>
<proteinExistence type="inferred from homology"/>